<keyword id="KW-0001">2Fe-2S</keyword>
<keyword id="KW-0963">Cytoplasm</keyword>
<keyword id="KW-0408">Iron</keyword>
<keyword id="KW-0411">Iron-sulfur</keyword>
<keyword id="KW-0479">Metal-binding</keyword>
<keyword id="KW-0496">Mitochondrion</keyword>
<keyword id="KW-1185">Reference proteome</keyword>
<keyword id="KW-0809">Transit peptide</keyword>
<proteinExistence type="evidence at protein level"/>
<dbReference type="EMBL" id="AJ866966">
    <property type="protein sequence ID" value="CAI29442.1"/>
    <property type="molecule type" value="mRNA"/>
</dbReference>
<dbReference type="EMBL" id="AL021712">
    <property type="protein sequence ID" value="CAA16772.1"/>
    <property type="molecule type" value="Genomic_DNA"/>
</dbReference>
<dbReference type="EMBL" id="AL161556">
    <property type="protein sequence ID" value="CAB79177.1"/>
    <property type="molecule type" value="Genomic_DNA"/>
</dbReference>
<dbReference type="EMBL" id="CP002687">
    <property type="protein sequence ID" value="AEE84576.1"/>
    <property type="molecule type" value="Genomic_DNA"/>
</dbReference>
<dbReference type="EMBL" id="AF361579">
    <property type="protein sequence ID" value="AAK32747.1"/>
    <property type="molecule type" value="mRNA"/>
</dbReference>
<dbReference type="EMBL" id="AY081721">
    <property type="protein sequence ID" value="AAL87374.1"/>
    <property type="molecule type" value="mRNA"/>
</dbReference>
<dbReference type="EMBL" id="AY088584">
    <property type="protein sequence ID" value="AAM66114.1"/>
    <property type="status" value="ALT_INIT"/>
    <property type="molecule type" value="mRNA"/>
</dbReference>
<dbReference type="PIR" id="T04903">
    <property type="entry name" value="T04903"/>
</dbReference>
<dbReference type="RefSeq" id="NP_193953.1">
    <property type="nucleotide sequence ID" value="NM_118347.3"/>
</dbReference>
<dbReference type="SMR" id="O49627"/>
<dbReference type="BioGRID" id="13605">
    <property type="interactions" value="5"/>
</dbReference>
<dbReference type="FunCoup" id="O49627">
    <property type="interactions" value="3424"/>
</dbReference>
<dbReference type="IntAct" id="O49627">
    <property type="interactions" value="6"/>
</dbReference>
<dbReference type="STRING" id="3702.O49627"/>
<dbReference type="MetOSite" id="O49627"/>
<dbReference type="SwissPalm" id="O49627"/>
<dbReference type="PaxDb" id="3702-AT4G22220.1"/>
<dbReference type="ProteomicsDB" id="238953"/>
<dbReference type="EnsemblPlants" id="AT4G22220.1">
    <property type="protein sequence ID" value="AT4G22220.1"/>
    <property type="gene ID" value="AT4G22220"/>
</dbReference>
<dbReference type="GeneID" id="828316"/>
<dbReference type="Gramene" id="AT4G22220.1">
    <property type="protein sequence ID" value="AT4G22220.1"/>
    <property type="gene ID" value="AT4G22220"/>
</dbReference>
<dbReference type="KEGG" id="ath:AT4G22220"/>
<dbReference type="Araport" id="AT4G22220"/>
<dbReference type="TAIR" id="AT4G22220">
    <property type="gene designation" value="ISU1"/>
</dbReference>
<dbReference type="eggNOG" id="KOG3361">
    <property type="taxonomic scope" value="Eukaryota"/>
</dbReference>
<dbReference type="HOGENOM" id="CLU_079283_5_0_1"/>
<dbReference type="InParanoid" id="O49627"/>
<dbReference type="OMA" id="SMVTEMV"/>
<dbReference type="PhylomeDB" id="O49627"/>
<dbReference type="UniPathway" id="UPA00266"/>
<dbReference type="PRO" id="PR:O49627"/>
<dbReference type="Proteomes" id="UP000006548">
    <property type="component" value="Chromosome 4"/>
</dbReference>
<dbReference type="ExpressionAtlas" id="O49627">
    <property type="expression patterns" value="baseline and differential"/>
</dbReference>
<dbReference type="GO" id="GO:0005829">
    <property type="term" value="C:cytosol"/>
    <property type="evidence" value="ECO:0007005"/>
    <property type="project" value="TAIR"/>
</dbReference>
<dbReference type="GO" id="GO:0005759">
    <property type="term" value="C:mitochondrial matrix"/>
    <property type="evidence" value="ECO:0007669"/>
    <property type="project" value="UniProtKB-SubCell"/>
</dbReference>
<dbReference type="GO" id="GO:0005739">
    <property type="term" value="C:mitochondrion"/>
    <property type="evidence" value="ECO:0000314"/>
    <property type="project" value="TAIR"/>
</dbReference>
<dbReference type="GO" id="GO:0051537">
    <property type="term" value="F:2 iron, 2 sulfur cluster binding"/>
    <property type="evidence" value="ECO:0007669"/>
    <property type="project" value="UniProtKB-KW"/>
</dbReference>
<dbReference type="GO" id="GO:0005506">
    <property type="term" value="F:iron ion binding"/>
    <property type="evidence" value="ECO:0007669"/>
    <property type="project" value="InterPro"/>
</dbReference>
<dbReference type="GO" id="GO:0005198">
    <property type="term" value="F:structural molecule activity"/>
    <property type="evidence" value="ECO:0000250"/>
    <property type="project" value="TAIR"/>
</dbReference>
<dbReference type="GO" id="GO:0016226">
    <property type="term" value="P:iron-sulfur cluster assembly"/>
    <property type="evidence" value="ECO:0007669"/>
    <property type="project" value="InterPro"/>
</dbReference>
<dbReference type="CDD" id="cd06664">
    <property type="entry name" value="IscU_like"/>
    <property type="match status" value="1"/>
</dbReference>
<dbReference type="FunFam" id="3.90.1010.10:FF:000001">
    <property type="entry name" value="Iron-sulfur cluster assembly scaffold protein IscU"/>
    <property type="match status" value="1"/>
</dbReference>
<dbReference type="Gene3D" id="3.90.1010.10">
    <property type="match status" value="1"/>
</dbReference>
<dbReference type="InterPro" id="IPR011339">
    <property type="entry name" value="ISCU"/>
</dbReference>
<dbReference type="InterPro" id="IPR002871">
    <property type="entry name" value="NIF_FeS_clus_asmbl_NifU_N"/>
</dbReference>
<dbReference type="NCBIfam" id="TIGR01999">
    <property type="entry name" value="iscU"/>
    <property type="match status" value="1"/>
</dbReference>
<dbReference type="PANTHER" id="PTHR10093">
    <property type="entry name" value="IRON-SULFUR CLUSTER ASSEMBLY ENZYME NIFU HOMOLOG"/>
    <property type="match status" value="1"/>
</dbReference>
<dbReference type="Pfam" id="PF01592">
    <property type="entry name" value="NifU_N"/>
    <property type="match status" value="1"/>
</dbReference>
<dbReference type="SUPFAM" id="SSF82649">
    <property type="entry name" value="SufE/NifU"/>
    <property type="match status" value="1"/>
</dbReference>
<name>ISU1_ARATH</name>
<organism>
    <name type="scientific">Arabidopsis thaliana</name>
    <name type="common">Mouse-ear cress</name>
    <dbReference type="NCBI Taxonomy" id="3702"/>
    <lineage>
        <taxon>Eukaryota</taxon>
        <taxon>Viridiplantae</taxon>
        <taxon>Streptophyta</taxon>
        <taxon>Embryophyta</taxon>
        <taxon>Tracheophyta</taxon>
        <taxon>Spermatophyta</taxon>
        <taxon>Magnoliopsida</taxon>
        <taxon>eudicotyledons</taxon>
        <taxon>Gunneridae</taxon>
        <taxon>Pentapetalae</taxon>
        <taxon>rosids</taxon>
        <taxon>malvids</taxon>
        <taxon>Brassicales</taxon>
        <taxon>Brassicaceae</taxon>
        <taxon>Camelineae</taxon>
        <taxon>Arabidopsis</taxon>
    </lineage>
</organism>
<sequence length="167" mass="17915">MMLKQAAKKALGLTSRQSTPWSVGILRTYHENVIDHYDNPRNVGSFDKNDPNVGTGLVGAPACGDVMKLQIKVDEKTGQIVDARFKTFGCGSAIASSSVATEWVKGKAMEDVLTIKNTEIAKHLSLPPVKLHCSMLAEDAIKAAVKDYKEKRVKTNGAAAAGETTQA</sequence>
<protein>
    <recommendedName>
        <fullName>Iron-sulfur cluster assembly protein 1</fullName>
        <shortName evidence="7">AtISU1</shortName>
        <shortName evidence="8">AtIscU1</shortName>
        <shortName>Protein ISCU-LIKE 1</shortName>
    </recommendedName>
    <alternativeName>
        <fullName>NifU-like N-terminal domain-containing protein ISU1</fullName>
    </alternativeName>
    <alternativeName>
        <fullName>NifU-like protein ISU1</fullName>
    </alternativeName>
</protein>
<accession>O49627</accession>
<accession>Q8L984</accession>
<comment type="function">
    <text evidence="1 3 5">Scaffold protein for the de novo synthesis of iron-sulfur (Fe-S) clusters within mitochondria, which is required for maturation of both mitochondrial and cytoplasmic [2Fe-2S] and [4Fe-4S] proteins (PubMed:15507320, PubMed:17417719). First, a [2Fe-2S] cluster is transiently assembled on the scaffold protein ISCU (ISU1, ISU2 or ISU3). In a second step, the cluster is released from ISCU, transferred to a glutaredoxin, followed by the formation of mitochondrial [2Fe-2S] proteins, the synthesis of [4Fe-4S] clusters and their target-specific insertion into the recipient apoproteins. Cluster assembly on ISCU depends on the function of the cysteine desulfurase complex NFS1-ISD11, which serves as the sulfur donor for cluster synthesis, the iron-binding protein frataxin as the putative iron donor, and the electron transfer chain comprised of ferredoxin reductase and ferredoxin, which receive their electrons from NADH (By similarity).</text>
</comment>
<comment type="cofactor">
    <cofactor evidence="5">
        <name>[2Fe-2S] cluster</name>
        <dbReference type="ChEBI" id="CHEBI:190135"/>
    </cofactor>
    <text evidence="5">Binds 1 [2Fe-2S] cluster per subunit.</text>
</comment>
<comment type="pathway">
    <text evidence="1">Cofactor biosynthesis; iron-sulfur cluster biosynthesis.</text>
</comment>
<comment type="subunit">
    <text evidence="1 6">Component of the core Fe-S cluster (ISC) assembly machinery (By similarity). Interacts with HSCB (PubMed:19865480).</text>
</comment>
<comment type="interaction">
    <interactant intactId="EBI-4435514">
        <id>O49627</id>
    </interactant>
    <interactant intactId="EBI-4429250">
        <id>Q9LPR8</id>
        <label>SCL3</label>
    </interactant>
    <organismsDiffer>false</organismsDiffer>
    <experiments>4</experiments>
</comment>
<comment type="subcellular location">
    <subcellularLocation>
        <location evidence="4 5 6">Mitochondrion matrix</location>
    </subcellularLocation>
    <subcellularLocation>
        <location evidence="6">Cytoplasm</location>
        <location evidence="6">Cytosol</location>
    </subcellularLocation>
    <text evidence="6">Localizes to the cytosol when interacting with HSCB.</text>
</comment>
<comment type="tissue specificity">
    <text evidence="3 4 5">Expressed in roots, stems, leaves, flowers, pollen and siliques.</text>
</comment>
<comment type="similarity">
    <text evidence="9">Belongs to the NifU family.</text>
</comment>
<comment type="sequence caution" evidence="9">
    <conflict type="erroneous initiation">
        <sequence resource="EMBL-CDS" id="AAM66114"/>
    </conflict>
    <text>Truncated N-terminus.</text>
</comment>
<evidence type="ECO:0000250" key="1">
    <source>
        <dbReference type="UniProtKB" id="Q03020"/>
    </source>
</evidence>
<evidence type="ECO:0000255" key="2"/>
<evidence type="ECO:0000269" key="3">
    <source>
    </source>
</evidence>
<evidence type="ECO:0000269" key="4">
    <source>
    </source>
</evidence>
<evidence type="ECO:0000269" key="5">
    <source>
    </source>
</evidence>
<evidence type="ECO:0000269" key="6">
    <source>
    </source>
</evidence>
<evidence type="ECO:0000303" key="7">
    <source>
    </source>
</evidence>
<evidence type="ECO:0000303" key="8">
    <source>
    </source>
</evidence>
<evidence type="ECO:0000305" key="9"/>
<evidence type="ECO:0000312" key="10">
    <source>
        <dbReference type="Araport" id="AT4G22220"/>
    </source>
</evidence>
<evidence type="ECO:0000312" key="11">
    <source>
        <dbReference type="EMBL" id="CAA16772.1"/>
    </source>
</evidence>
<gene>
    <name type="primary">ISU1</name>
    <name evidence="8" type="synonym">ISCU1</name>
    <name evidence="10" type="ordered locus">At4g22220</name>
    <name evidence="11" type="ORF">T10I14.50</name>
</gene>
<feature type="transit peptide" description="Mitochondrion" evidence="2">
    <location>
        <begin position="1"/>
        <end position="50"/>
    </location>
</feature>
<feature type="chain" id="PRO_0000415320" description="Iron-sulfur cluster assembly protein 1">
    <location>
        <begin position="51"/>
        <end position="167"/>
    </location>
</feature>
<feature type="sequence conflict" description="In Ref. 6; AAM66114." evidence="9" ref="6">
    <original>GIL</original>
    <variation>SIF</variation>
    <location>
        <begin position="24"/>
        <end position="26"/>
    </location>
</feature>
<reference key="1">
    <citation type="journal article" date="2004" name="Biochim. Biophys. Acta">
        <title>Isolation and characterization of Arabidopsis thaliana ISU1 gene.</title>
        <authorList>
            <person name="Tone Y."/>
            <person name="Kawai-Yamada M."/>
            <person name="Uchimiya H."/>
        </authorList>
    </citation>
    <scope>NUCLEOTIDE SEQUENCE [MRNA]</scope>
    <scope>FUNCTION</scope>
    <scope>TISSUE SPECIFICITY</scope>
</reference>
<reference key="2">
    <citation type="journal article" date="2005" name="FEBS Lett.">
        <title>Mitochondrial localization of Arabidopsis thaliana Isu Fe-S scaffold proteins.</title>
        <authorList>
            <person name="Leon S."/>
            <person name="Touraine B."/>
            <person name="Briat J.-F."/>
            <person name="Lobreaux S."/>
        </authorList>
    </citation>
    <scope>NUCLEOTIDE SEQUENCE [MRNA]</scope>
    <scope>SUBCELLULAR LOCATION</scope>
    <scope>TISSUE SPECIFICITY</scope>
    <scope>GENE FAMILY</scope>
    <scope>NOMENCLATURE</scope>
    <source>
        <strain>cv. Columbia</strain>
    </source>
</reference>
<reference key="3">
    <citation type="journal article" date="1999" name="Nature">
        <title>Sequence and analysis of chromosome 4 of the plant Arabidopsis thaliana.</title>
        <authorList>
            <person name="Mayer K.F.X."/>
            <person name="Schueller C."/>
            <person name="Wambutt R."/>
            <person name="Murphy G."/>
            <person name="Volckaert G."/>
            <person name="Pohl T."/>
            <person name="Duesterhoeft A."/>
            <person name="Stiekema W."/>
            <person name="Entian K.-D."/>
            <person name="Terryn N."/>
            <person name="Harris B."/>
            <person name="Ansorge W."/>
            <person name="Brandt P."/>
            <person name="Grivell L.A."/>
            <person name="Rieger M."/>
            <person name="Weichselgartner M."/>
            <person name="de Simone V."/>
            <person name="Obermaier B."/>
            <person name="Mache R."/>
            <person name="Mueller M."/>
            <person name="Kreis M."/>
            <person name="Delseny M."/>
            <person name="Puigdomenech P."/>
            <person name="Watson M."/>
            <person name="Schmidtheini T."/>
            <person name="Reichert B."/>
            <person name="Portetelle D."/>
            <person name="Perez-Alonso M."/>
            <person name="Boutry M."/>
            <person name="Bancroft I."/>
            <person name="Vos P."/>
            <person name="Hoheisel J."/>
            <person name="Zimmermann W."/>
            <person name="Wedler H."/>
            <person name="Ridley P."/>
            <person name="Langham S.-A."/>
            <person name="McCullagh B."/>
            <person name="Bilham L."/>
            <person name="Robben J."/>
            <person name="van der Schueren J."/>
            <person name="Grymonprez B."/>
            <person name="Chuang Y.-J."/>
            <person name="Vandenbussche F."/>
            <person name="Braeken M."/>
            <person name="Weltjens I."/>
            <person name="Voet M."/>
            <person name="Bastiaens I."/>
            <person name="Aert R."/>
            <person name="Defoor E."/>
            <person name="Weitzenegger T."/>
            <person name="Bothe G."/>
            <person name="Ramsperger U."/>
            <person name="Hilbert H."/>
            <person name="Braun M."/>
            <person name="Holzer E."/>
            <person name="Brandt A."/>
            <person name="Peters S."/>
            <person name="van Staveren M."/>
            <person name="Dirkse W."/>
            <person name="Mooijman P."/>
            <person name="Klein Lankhorst R."/>
            <person name="Rose M."/>
            <person name="Hauf J."/>
            <person name="Koetter P."/>
            <person name="Berneiser S."/>
            <person name="Hempel S."/>
            <person name="Feldpausch M."/>
            <person name="Lamberth S."/>
            <person name="Van den Daele H."/>
            <person name="De Keyser A."/>
            <person name="Buysshaert C."/>
            <person name="Gielen J."/>
            <person name="Villarroel R."/>
            <person name="De Clercq R."/>
            <person name="van Montagu M."/>
            <person name="Rogers J."/>
            <person name="Cronin A."/>
            <person name="Quail M.A."/>
            <person name="Bray-Allen S."/>
            <person name="Clark L."/>
            <person name="Doggett J."/>
            <person name="Hall S."/>
            <person name="Kay M."/>
            <person name="Lennard N."/>
            <person name="McLay K."/>
            <person name="Mayes R."/>
            <person name="Pettett A."/>
            <person name="Rajandream M.A."/>
            <person name="Lyne M."/>
            <person name="Benes V."/>
            <person name="Rechmann S."/>
            <person name="Borkova D."/>
            <person name="Bloecker H."/>
            <person name="Scharfe M."/>
            <person name="Grimm M."/>
            <person name="Loehnert T.-H."/>
            <person name="Dose S."/>
            <person name="de Haan M."/>
            <person name="Maarse A.C."/>
            <person name="Schaefer M."/>
            <person name="Mueller-Auer S."/>
            <person name="Gabel C."/>
            <person name="Fuchs M."/>
            <person name="Fartmann B."/>
            <person name="Granderath K."/>
            <person name="Dauner D."/>
            <person name="Herzl A."/>
            <person name="Neumann S."/>
            <person name="Argiriou A."/>
            <person name="Vitale D."/>
            <person name="Liguori R."/>
            <person name="Piravandi E."/>
            <person name="Massenet O."/>
            <person name="Quigley F."/>
            <person name="Clabauld G."/>
            <person name="Muendlein A."/>
            <person name="Felber R."/>
            <person name="Schnabl S."/>
            <person name="Hiller R."/>
            <person name="Schmidt W."/>
            <person name="Lecharny A."/>
            <person name="Aubourg S."/>
            <person name="Chefdor F."/>
            <person name="Cooke R."/>
            <person name="Berger C."/>
            <person name="Monfort A."/>
            <person name="Casacuberta E."/>
            <person name="Gibbons T."/>
            <person name="Weber N."/>
            <person name="Vandenbol M."/>
            <person name="Bargues M."/>
            <person name="Terol J."/>
            <person name="Torres A."/>
            <person name="Perez-Perez A."/>
            <person name="Purnelle B."/>
            <person name="Bent E."/>
            <person name="Johnson S."/>
            <person name="Tacon D."/>
            <person name="Jesse T."/>
            <person name="Heijnen L."/>
            <person name="Schwarz S."/>
            <person name="Scholler P."/>
            <person name="Heber S."/>
            <person name="Francs P."/>
            <person name="Bielke C."/>
            <person name="Frishman D."/>
            <person name="Haase D."/>
            <person name="Lemcke K."/>
            <person name="Mewes H.-W."/>
            <person name="Stocker S."/>
            <person name="Zaccaria P."/>
            <person name="Bevan M."/>
            <person name="Wilson R.K."/>
            <person name="de la Bastide M."/>
            <person name="Habermann K."/>
            <person name="Parnell L."/>
            <person name="Dedhia N."/>
            <person name="Gnoj L."/>
            <person name="Schutz K."/>
            <person name="Huang E."/>
            <person name="Spiegel L."/>
            <person name="Sekhon M."/>
            <person name="Murray J."/>
            <person name="Sheet P."/>
            <person name="Cordes M."/>
            <person name="Abu-Threideh J."/>
            <person name="Stoneking T."/>
            <person name="Kalicki J."/>
            <person name="Graves T."/>
            <person name="Harmon G."/>
            <person name="Edwards J."/>
            <person name="Latreille P."/>
            <person name="Courtney L."/>
            <person name="Cloud J."/>
            <person name="Abbott A."/>
            <person name="Scott K."/>
            <person name="Johnson D."/>
            <person name="Minx P."/>
            <person name="Bentley D."/>
            <person name="Fulton B."/>
            <person name="Miller N."/>
            <person name="Greco T."/>
            <person name="Kemp K."/>
            <person name="Kramer J."/>
            <person name="Fulton L."/>
            <person name="Mardis E."/>
            <person name="Dante M."/>
            <person name="Pepin K."/>
            <person name="Hillier L.W."/>
            <person name="Nelson J."/>
            <person name="Spieth J."/>
            <person name="Ryan E."/>
            <person name="Andrews S."/>
            <person name="Geisel C."/>
            <person name="Layman D."/>
            <person name="Du H."/>
            <person name="Ali J."/>
            <person name="Berghoff A."/>
            <person name="Jones K."/>
            <person name="Drone K."/>
            <person name="Cotton M."/>
            <person name="Joshu C."/>
            <person name="Antonoiu B."/>
            <person name="Zidanic M."/>
            <person name="Strong C."/>
            <person name="Sun H."/>
            <person name="Lamar B."/>
            <person name="Yordan C."/>
            <person name="Ma P."/>
            <person name="Zhong J."/>
            <person name="Preston R."/>
            <person name="Vil D."/>
            <person name="Shekher M."/>
            <person name="Matero A."/>
            <person name="Shah R."/>
            <person name="Swaby I.K."/>
            <person name="O'Shaughnessy A."/>
            <person name="Rodriguez M."/>
            <person name="Hoffman J."/>
            <person name="Till S."/>
            <person name="Granat S."/>
            <person name="Shohdy N."/>
            <person name="Hasegawa A."/>
            <person name="Hameed A."/>
            <person name="Lodhi M."/>
            <person name="Johnson A."/>
            <person name="Chen E."/>
            <person name="Marra M.A."/>
            <person name="Martienssen R."/>
            <person name="McCombie W.R."/>
        </authorList>
    </citation>
    <scope>NUCLEOTIDE SEQUENCE [LARGE SCALE GENOMIC DNA]</scope>
    <source>
        <strain>cv. Columbia</strain>
    </source>
</reference>
<reference key="4">
    <citation type="journal article" date="2017" name="Plant J.">
        <title>Araport11: a complete reannotation of the Arabidopsis thaliana reference genome.</title>
        <authorList>
            <person name="Cheng C.Y."/>
            <person name="Krishnakumar V."/>
            <person name="Chan A.P."/>
            <person name="Thibaud-Nissen F."/>
            <person name="Schobel S."/>
            <person name="Town C.D."/>
        </authorList>
    </citation>
    <scope>GENOME REANNOTATION</scope>
    <source>
        <strain>cv. Columbia</strain>
    </source>
</reference>
<reference key="5">
    <citation type="journal article" date="2003" name="Science">
        <title>Empirical analysis of transcriptional activity in the Arabidopsis genome.</title>
        <authorList>
            <person name="Yamada K."/>
            <person name="Lim J."/>
            <person name="Dale J.M."/>
            <person name="Chen H."/>
            <person name="Shinn P."/>
            <person name="Palm C.J."/>
            <person name="Southwick A.M."/>
            <person name="Wu H.C."/>
            <person name="Kim C.J."/>
            <person name="Nguyen M."/>
            <person name="Pham P.K."/>
            <person name="Cheuk R.F."/>
            <person name="Karlin-Newmann G."/>
            <person name="Liu S.X."/>
            <person name="Lam B."/>
            <person name="Sakano H."/>
            <person name="Wu T."/>
            <person name="Yu G."/>
            <person name="Miranda M."/>
            <person name="Quach H.L."/>
            <person name="Tripp M."/>
            <person name="Chang C.H."/>
            <person name="Lee J.M."/>
            <person name="Toriumi M.J."/>
            <person name="Chan M.M."/>
            <person name="Tang C.C."/>
            <person name="Onodera C.S."/>
            <person name="Deng J.M."/>
            <person name="Akiyama K."/>
            <person name="Ansari Y."/>
            <person name="Arakawa T."/>
            <person name="Banh J."/>
            <person name="Banno F."/>
            <person name="Bowser L."/>
            <person name="Brooks S.Y."/>
            <person name="Carninci P."/>
            <person name="Chao Q."/>
            <person name="Choy N."/>
            <person name="Enju A."/>
            <person name="Goldsmith A.D."/>
            <person name="Gurjal M."/>
            <person name="Hansen N.F."/>
            <person name="Hayashizaki Y."/>
            <person name="Johnson-Hopson C."/>
            <person name="Hsuan V.W."/>
            <person name="Iida K."/>
            <person name="Karnes M."/>
            <person name="Khan S."/>
            <person name="Koesema E."/>
            <person name="Ishida J."/>
            <person name="Jiang P.X."/>
            <person name="Jones T."/>
            <person name="Kawai J."/>
            <person name="Kamiya A."/>
            <person name="Meyers C."/>
            <person name="Nakajima M."/>
            <person name="Narusaka M."/>
            <person name="Seki M."/>
            <person name="Sakurai T."/>
            <person name="Satou M."/>
            <person name="Tamse R."/>
            <person name="Vaysberg M."/>
            <person name="Wallender E.K."/>
            <person name="Wong C."/>
            <person name="Yamamura Y."/>
            <person name="Yuan S."/>
            <person name="Shinozaki K."/>
            <person name="Davis R.W."/>
            <person name="Theologis A."/>
            <person name="Ecker J.R."/>
        </authorList>
    </citation>
    <scope>NUCLEOTIDE SEQUENCE [LARGE SCALE MRNA]</scope>
    <source>
        <strain>cv. Columbia</strain>
    </source>
</reference>
<reference key="6">
    <citation type="submission" date="2002-03" db="EMBL/GenBank/DDBJ databases">
        <title>Full-length cDNA from Arabidopsis thaliana.</title>
        <authorList>
            <person name="Brover V.V."/>
            <person name="Troukhan M.E."/>
            <person name="Alexandrov N.A."/>
            <person name="Lu Y.-P."/>
            <person name="Flavell R.B."/>
            <person name="Feldmann K.A."/>
        </authorList>
    </citation>
    <scope>NUCLEOTIDE SEQUENCE [LARGE SCALE MRNA]</scope>
</reference>
<reference key="7">
    <citation type="journal article" date="2007" name="Plant Mol. Biol.">
        <title>Functional analysis of Arabidopsis genes involved in mitochondrial iron-sulfur cluster assembly.</title>
        <authorList>
            <person name="Frazzon A.P.G."/>
            <person name="Ramirez M.V."/>
            <person name="Warek U."/>
            <person name="Balk J."/>
            <person name="Frazzon J."/>
            <person name="Dean D.R."/>
            <person name="Winkel B.S.J."/>
        </authorList>
    </citation>
    <scope>FUNCTION</scope>
    <scope>COFACTOR</scope>
    <scope>TISSUE SPECIFICITY</scope>
    <scope>SUBCELLULAR LOCATION</scope>
    <source>
        <strain>cv. Columbia</strain>
    </source>
</reference>
<reference key="8">
    <citation type="journal article" date="2009" name="PLoS ONE">
        <title>Dual localized AtHscB involved in iron sulfur protein biogenesis in Arabidopsis.</title>
        <authorList>
            <person name="Xu X.M."/>
            <person name="Lin H."/>
            <person name="Latijnhouwers M."/>
            <person name="Moeller S.G."/>
        </authorList>
    </citation>
    <scope>INTERACTION WITH HSCB</scope>
    <scope>SUBCELLULAR LOCATION</scope>
</reference>